<sequence>MRIGLFAVGRLKSGPEKDLAARYFDRFAKAGPAVGLELTRVAEVAESRASNAETRKREEAAMLLKSLADGSILILLDERGKALDSEAFANLLGSYRDQGKRELTIAIGGADGLDPSLYDRADATLCLGKMTWPHQLVRTLIAEQLYRAVTILSGHPYHRV</sequence>
<reference key="1">
    <citation type="journal article" date="2006" name="Genome Biol.">
        <title>The genome of Rhizobium leguminosarum has recognizable core and accessory components.</title>
        <authorList>
            <person name="Young J.P.W."/>
            <person name="Crossman L.C."/>
            <person name="Johnston A.W.B."/>
            <person name="Thomson N.R."/>
            <person name="Ghazoui Z.F."/>
            <person name="Hull K.H."/>
            <person name="Wexler M."/>
            <person name="Curson A.R.J."/>
            <person name="Todd J.D."/>
            <person name="Poole P.S."/>
            <person name="Mauchline T.H."/>
            <person name="East A.K."/>
            <person name="Quail M.A."/>
            <person name="Churcher C."/>
            <person name="Arrowsmith C."/>
            <person name="Cherevach I."/>
            <person name="Chillingworth T."/>
            <person name="Clarke K."/>
            <person name="Cronin A."/>
            <person name="Davis P."/>
            <person name="Fraser A."/>
            <person name="Hance Z."/>
            <person name="Hauser H."/>
            <person name="Jagels K."/>
            <person name="Moule S."/>
            <person name="Mungall K."/>
            <person name="Norbertczak H."/>
            <person name="Rabbinowitsch E."/>
            <person name="Sanders M."/>
            <person name="Simmonds M."/>
            <person name="Whitehead S."/>
            <person name="Parkhill J."/>
        </authorList>
    </citation>
    <scope>NUCLEOTIDE SEQUENCE [LARGE SCALE GENOMIC DNA]</scope>
    <source>
        <strain>DSM 114642 / LMG 32736 / 3841</strain>
    </source>
</reference>
<proteinExistence type="inferred from homology"/>
<gene>
    <name evidence="1" type="primary">rlmH</name>
    <name type="ordered locus">RL4690</name>
</gene>
<organism>
    <name type="scientific">Rhizobium johnstonii (strain DSM 114642 / LMG 32736 / 3841)</name>
    <name type="common">Rhizobium leguminosarum bv. viciae</name>
    <dbReference type="NCBI Taxonomy" id="216596"/>
    <lineage>
        <taxon>Bacteria</taxon>
        <taxon>Pseudomonadati</taxon>
        <taxon>Pseudomonadota</taxon>
        <taxon>Alphaproteobacteria</taxon>
        <taxon>Hyphomicrobiales</taxon>
        <taxon>Rhizobiaceae</taxon>
        <taxon>Rhizobium/Agrobacterium group</taxon>
        <taxon>Rhizobium</taxon>
        <taxon>Rhizobium johnstonii</taxon>
    </lineage>
</organism>
<comment type="function">
    <text evidence="1">Specifically methylates the pseudouridine at position 1915 (m3Psi1915) in 23S rRNA.</text>
</comment>
<comment type="catalytic activity">
    <reaction evidence="1">
        <text>pseudouridine(1915) in 23S rRNA + S-adenosyl-L-methionine = N(3)-methylpseudouridine(1915) in 23S rRNA + S-adenosyl-L-homocysteine + H(+)</text>
        <dbReference type="Rhea" id="RHEA:42752"/>
        <dbReference type="Rhea" id="RHEA-COMP:10221"/>
        <dbReference type="Rhea" id="RHEA-COMP:10222"/>
        <dbReference type="ChEBI" id="CHEBI:15378"/>
        <dbReference type="ChEBI" id="CHEBI:57856"/>
        <dbReference type="ChEBI" id="CHEBI:59789"/>
        <dbReference type="ChEBI" id="CHEBI:65314"/>
        <dbReference type="ChEBI" id="CHEBI:74486"/>
        <dbReference type="EC" id="2.1.1.177"/>
    </reaction>
</comment>
<comment type="subunit">
    <text evidence="1">Homodimer.</text>
</comment>
<comment type="subcellular location">
    <subcellularLocation>
        <location evidence="1">Cytoplasm</location>
    </subcellularLocation>
</comment>
<comment type="similarity">
    <text evidence="1">Belongs to the RNA methyltransferase RlmH family.</text>
</comment>
<keyword id="KW-0963">Cytoplasm</keyword>
<keyword id="KW-0489">Methyltransferase</keyword>
<keyword id="KW-0698">rRNA processing</keyword>
<keyword id="KW-0949">S-adenosyl-L-methionine</keyword>
<keyword id="KW-0808">Transferase</keyword>
<evidence type="ECO:0000255" key="1">
    <source>
        <dbReference type="HAMAP-Rule" id="MF_00658"/>
    </source>
</evidence>
<protein>
    <recommendedName>
        <fullName evidence="1">Ribosomal RNA large subunit methyltransferase H</fullName>
        <ecNumber evidence="1">2.1.1.177</ecNumber>
    </recommendedName>
    <alternativeName>
        <fullName evidence="1">23S rRNA (pseudouridine1915-N3)-methyltransferase</fullName>
    </alternativeName>
    <alternativeName>
        <fullName evidence="1">23S rRNA m3Psi1915 methyltransferase</fullName>
    </alternativeName>
    <alternativeName>
        <fullName evidence="1">rRNA (pseudouridine-N3-)-methyltransferase RlmH</fullName>
    </alternativeName>
</protein>
<dbReference type="EC" id="2.1.1.177" evidence="1"/>
<dbReference type="EMBL" id="AM236080">
    <property type="protein sequence ID" value="CAK10173.1"/>
    <property type="molecule type" value="Genomic_DNA"/>
</dbReference>
<dbReference type="RefSeq" id="WP_011654027.1">
    <property type="nucleotide sequence ID" value="NC_008380.1"/>
</dbReference>
<dbReference type="SMR" id="Q1MA67"/>
<dbReference type="EnsemblBacteria" id="CAK10173">
    <property type="protein sequence ID" value="CAK10173"/>
    <property type="gene ID" value="RL4690"/>
</dbReference>
<dbReference type="GeneID" id="84672344"/>
<dbReference type="KEGG" id="rle:RL4690"/>
<dbReference type="eggNOG" id="COG1576">
    <property type="taxonomic scope" value="Bacteria"/>
</dbReference>
<dbReference type="HOGENOM" id="CLU_100552_1_1_5"/>
<dbReference type="Proteomes" id="UP000006575">
    <property type="component" value="Chromosome"/>
</dbReference>
<dbReference type="GO" id="GO:0005737">
    <property type="term" value="C:cytoplasm"/>
    <property type="evidence" value="ECO:0007669"/>
    <property type="project" value="UniProtKB-SubCell"/>
</dbReference>
<dbReference type="GO" id="GO:0070038">
    <property type="term" value="F:rRNA (pseudouridine-N3-)-methyltransferase activity"/>
    <property type="evidence" value="ECO:0007669"/>
    <property type="project" value="UniProtKB-UniRule"/>
</dbReference>
<dbReference type="CDD" id="cd18081">
    <property type="entry name" value="RlmH-like"/>
    <property type="match status" value="1"/>
</dbReference>
<dbReference type="Gene3D" id="3.40.1280.10">
    <property type="match status" value="1"/>
</dbReference>
<dbReference type="HAMAP" id="MF_00658">
    <property type="entry name" value="23SrRNA_methyltr_H"/>
    <property type="match status" value="1"/>
</dbReference>
<dbReference type="InterPro" id="IPR029028">
    <property type="entry name" value="Alpha/beta_knot_MTases"/>
</dbReference>
<dbReference type="InterPro" id="IPR003742">
    <property type="entry name" value="RlmH-like"/>
</dbReference>
<dbReference type="InterPro" id="IPR029026">
    <property type="entry name" value="tRNA_m1G_MTases_N"/>
</dbReference>
<dbReference type="NCBIfam" id="NF000989">
    <property type="entry name" value="PRK00103.2-3"/>
    <property type="match status" value="1"/>
</dbReference>
<dbReference type="PANTHER" id="PTHR33603">
    <property type="entry name" value="METHYLTRANSFERASE"/>
    <property type="match status" value="1"/>
</dbReference>
<dbReference type="PANTHER" id="PTHR33603:SF1">
    <property type="entry name" value="RIBOSOMAL RNA LARGE SUBUNIT METHYLTRANSFERASE H"/>
    <property type="match status" value="1"/>
</dbReference>
<dbReference type="Pfam" id="PF02590">
    <property type="entry name" value="SPOUT_MTase"/>
    <property type="match status" value="1"/>
</dbReference>
<dbReference type="PIRSF" id="PIRSF004505">
    <property type="entry name" value="MT_bac"/>
    <property type="match status" value="1"/>
</dbReference>
<dbReference type="SUPFAM" id="SSF75217">
    <property type="entry name" value="alpha/beta knot"/>
    <property type="match status" value="1"/>
</dbReference>
<accession>Q1MA67</accession>
<feature type="chain" id="PRO_0000260594" description="Ribosomal RNA large subunit methyltransferase H">
    <location>
        <begin position="1"/>
        <end position="160"/>
    </location>
</feature>
<feature type="binding site" evidence="1">
    <location>
        <position position="76"/>
    </location>
    <ligand>
        <name>S-adenosyl-L-methionine</name>
        <dbReference type="ChEBI" id="CHEBI:59789"/>
    </ligand>
</feature>
<feature type="binding site" evidence="1">
    <location>
        <position position="108"/>
    </location>
    <ligand>
        <name>S-adenosyl-L-methionine</name>
        <dbReference type="ChEBI" id="CHEBI:59789"/>
    </ligand>
</feature>
<feature type="binding site" evidence="1">
    <location>
        <begin position="127"/>
        <end position="132"/>
    </location>
    <ligand>
        <name>S-adenosyl-L-methionine</name>
        <dbReference type="ChEBI" id="CHEBI:59789"/>
    </ligand>
</feature>
<name>RLMH_RHIJ3</name>